<name>PTSO_KLEOX</name>
<reference key="1">
    <citation type="submission" date="1995-08" db="EMBL/GenBank/DDBJ databases">
        <title>Sequence and characterisation of distal genes in the Klebsiella pneumoniae rpoN operon.</title>
        <authorList>
            <person name="Merrick M.J."/>
            <person name="Taylor M."/>
        </authorList>
    </citation>
    <scope>NUCLEOTIDE SEQUENCE [GENOMIC DNA]</scope>
    <source>
        <strain>M5a1</strain>
    </source>
</reference>
<comment type="function">
    <text evidence="1">Component of the phosphoenolpyruvate-dependent nitrogen-metabolic phosphotransferase system (nitrogen-metabolic PTS), that seems to be involved in regulating nitrogen metabolism. The phosphoryl group from phosphoenolpyruvate (PEP) is transferred to the phosphoryl carrier protein NPr by enzyme I-Ntr. Phospho-NPr then transfers it to EIIA-Ntr. Could function in the transcriptional regulation of sigma-54 dependent operons in conjunction with the NPr (PtsO) and EIIA-Ntr (PtsN) proteins.</text>
</comment>
<comment type="subcellular location">
    <subcellularLocation>
        <location evidence="3">Cytoplasm</location>
    </subcellularLocation>
</comment>
<comment type="similarity">
    <text evidence="3">Belongs to the HPr family.</text>
</comment>
<protein>
    <recommendedName>
        <fullName>Phosphocarrier protein NPr</fullName>
    </recommendedName>
    <alternativeName>
        <fullName>Nitrogen-related HPr</fullName>
    </alternativeName>
</protein>
<accession>P51185</accession>
<evidence type="ECO:0000250" key="1"/>
<evidence type="ECO:0000255" key="2">
    <source>
        <dbReference type="PROSITE-ProRule" id="PRU00681"/>
    </source>
</evidence>
<evidence type="ECO:0000305" key="3"/>
<proteinExistence type="inferred from homology"/>
<gene>
    <name type="primary">ptsO</name>
    <name type="synonym">npr</name>
</gene>
<organism>
    <name type="scientific">Klebsiella oxytoca</name>
    <dbReference type="NCBI Taxonomy" id="571"/>
    <lineage>
        <taxon>Bacteria</taxon>
        <taxon>Pseudomonadati</taxon>
        <taxon>Pseudomonadota</taxon>
        <taxon>Gammaproteobacteria</taxon>
        <taxon>Enterobacterales</taxon>
        <taxon>Enterobacteriaceae</taxon>
        <taxon>Klebsiella/Raoultella group</taxon>
        <taxon>Klebsiella</taxon>
    </lineage>
</organism>
<keyword id="KW-0963">Cytoplasm</keyword>
<keyword id="KW-0598">Phosphotransferase system</keyword>
<dbReference type="EMBL" id="Z50803">
    <property type="protein sequence ID" value="CAA90685.1"/>
    <property type="molecule type" value="Genomic_DNA"/>
</dbReference>
<dbReference type="PIR" id="S60667">
    <property type="entry name" value="S60667"/>
</dbReference>
<dbReference type="SMR" id="P51185"/>
<dbReference type="STRING" id="571.AB185_09950"/>
<dbReference type="eggNOG" id="COG1925">
    <property type="taxonomic scope" value="Bacteria"/>
</dbReference>
<dbReference type="GO" id="GO:0005737">
    <property type="term" value="C:cytoplasm"/>
    <property type="evidence" value="ECO:0007669"/>
    <property type="project" value="UniProtKB-SubCell"/>
</dbReference>
<dbReference type="GO" id="GO:0009401">
    <property type="term" value="P:phosphoenolpyruvate-dependent sugar phosphotransferase system"/>
    <property type="evidence" value="ECO:0007669"/>
    <property type="project" value="UniProtKB-KW"/>
</dbReference>
<dbReference type="CDD" id="cd00367">
    <property type="entry name" value="PTS-HPr_like"/>
    <property type="match status" value="1"/>
</dbReference>
<dbReference type="FunFam" id="3.30.1340.10:FF:000002">
    <property type="entry name" value="PTS phosphocarrier protein NPr"/>
    <property type="match status" value="1"/>
</dbReference>
<dbReference type="Gene3D" id="3.30.1340.10">
    <property type="entry name" value="HPr-like"/>
    <property type="match status" value="1"/>
</dbReference>
<dbReference type="InterPro" id="IPR050399">
    <property type="entry name" value="HPr"/>
</dbReference>
<dbReference type="InterPro" id="IPR000032">
    <property type="entry name" value="HPr-like"/>
</dbReference>
<dbReference type="InterPro" id="IPR035895">
    <property type="entry name" value="HPr-like_sf"/>
</dbReference>
<dbReference type="InterPro" id="IPR001020">
    <property type="entry name" value="PTS_HPr_His_P_site"/>
</dbReference>
<dbReference type="InterPro" id="IPR002114">
    <property type="entry name" value="PTS_HPr_Ser_P_site"/>
</dbReference>
<dbReference type="NCBIfam" id="NF008146">
    <property type="entry name" value="PRK10897.1"/>
    <property type="match status" value="1"/>
</dbReference>
<dbReference type="NCBIfam" id="TIGR01003">
    <property type="entry name" value="PTS_HPr_family"/>
    <property type="match status" value="1"/>
</dbReference>
<dbReference type="PANTHER" id="PTHR33705">
    <property type="entry name" value="PHOSPHOCARRIER PROTEIN HPR"/>
    <property type="match status" value="1"/>
</dbReference>
<dbReference type="PANTHER" id="PTHR33705:SF2">
    <property type="entry name" value="PHOSPHOCARRIER PROTEIN NPR"/>
    <property type="match status" value="1"/>
</dbReference>
<dbReference type="Pfam" id="PF00381">
    <property type="entry name" value="PTS-HPr"/>
    <property type="match status" value="1"/>
</dbReference>
<dbReference type="PRINTS" id="PR00107">
    <property type="entry name" value="PHOSPHOCPHPR"/>
</dbReference>
<dbReference type="SUPFAM" id="SSF55594">
    <property type="entry name" value="HPr-like"/>
    <property type="match status" value="1"/>
</dbReference>
<dbReference type="PROSITE" id="PS51350">
    <property type="entry name" value="PTS_HPR_DOM"/>
    <property type="match status" value="1"/>
</dbReference>
<dbReference type="PROSITE" id="PS00369">
    <property type="entry name" value="PTS_HPR_HIS"/>
    <property type="match status" value="1"/>
</dbReference>
<dbReference type="PROSITE" id="PS00589">
    <property type="entry name" value="PTS_HPR_SER"/>
    <property type="match status" value="1"/>
</dbReference>
<sequence length="90" mass="9820">MTVKQTVEISNKLGMHARPAMKLFELMQNYDAEVLLRNDEGTVAEANSVIALLMLDSAKGRQIEIEANGPQEVEALAAVIALFNAGFDED</sequence>
<feature type="chain" id="PRO_0000107893" description="Phosphocarrier protein NPr">
    <location>
        <begin position="1"/>
        <end position="90"/>
    </location>
</feature>
<feature type="domain" description="HPr" evidence="2">
    <location>
        <begin position="2"/>
        <end position="90"/>
    </location>
</feature>
<feature type="active site" description="Pros-phosphohistidine intermediate" evidence="2">
    <location>
        <position position="16"/>
    </location>
</feature>